<name>FLIM_CAUVN</name>
<protein>
    <recommendedName>
        <fullName>Flagellar motor switch protein FliM</fullName>
    </recommendedName>
</protein>
<organism>
    <name type="scientific">Caulobacter vibrioides (strain NA1000 / CB15N)</name>
    <name type="common">Caulobacter crescentus</name>
    <dbReference type="NCBI Taxonomy" id="565050"/>
    <lineage>
        <taxon>Bacteria</taxon>
        <taxon>Pseudomonadati</taxon>
        <taxon>Pseudomonadota</taxon>
        <taxon>Alphaproteobacteria</taxon>
        <taxon>Caulobacterales</taxon>
        <taxon>Caulobacteraceae</taxon>
        <taxon>Caulobacter</taxon>
    </lineage>
</organism>
<evidence type="ECO:0000250" key="1"/>
<evidence type="ECO:0000256" key="2">
    <source>
        <dbReference type="SAM" id="MobiDB-lite"/>
    </source>
</evidence>
<evidence type="ECO:0000305" key="3"/>
<proteinExistence type="inferred from homology"/>
<gene>
    <name type="primary">fliM</name>
    <name type="synonym">flbO</name>
    <name type="ordered locus">CCNA_02140</name>
</gene>
<accession>B8GXB5</accession>
<accession>P34009</accession>
<keyword id="KW-0975">Bacterial flagellum</keyword>
<keyword id="KW-0997">Cell inner membrane</keyword>
<keyword id="KW-1003">Cell membrane</keyword>
<keyword id="KW-0145">Chemotaxis</keyword>
<keyword id="KW-0283">Flagellar rotation</keyword>
<keyword id="KW-0472">Membrane</keyword>
<keyword id="KW-1185">Reference proteome</keyword>
<dbReference type="EMBL" id="M85232">
    <property type="protein sequence ID" value="AAA62449.1"/>
    <property type="molecule type" value="Genomic_DNA"/>
</dbReference>
<dbReference type="EMBL" id="CP001340">
    <property type="protein sequence ID" value="ACL95605.1"/>
    <property type="molecule type" value="Genomic_DNA"/>
</dbReference>
<dbReference type="RefSeq" id="WP_012640397.1">
    <property type="nucleotide sequence ID" value="NC_011916.1"/>
</dbReference>
<dbReference type="RefSeq" id="YP_002517513.1">
    <property type="nucleotide sequence ID" value="NC_011916.1"/>
</dbReference>
<dbReference type="SMR" id="B8GXB5"/>
<dbReference type="GeneID" id="7330446"/>
<dbReference type="KEGG" id="ccs:CCNA_02140"/>
<dbReference type="PATRIC" id="fig|565050.3.peg.2098"/>
<dbReference type="HOGENOM" id="CLU_052646_2_0_5"/>
<dbReference type="OrthoDB" id="9806941at2"/>
<dbReference type="PhylomeDB" id="B8GXB5"/>
<dbReference type="Proteomes" id="UP000001364">
    <property type="component" value="Chromosome"/>
</dbReference>
<dbReference type="GO" id="GO:0009425">
    <property type="term" value="C:bacterial-type flagellum basal body"/>
    <property type="evidence" value="ECO:0007669"/>
    <property type="project" value="UniProtKB-SubCell"/>
</dbReference>
<dbReference type="GO" id="GO:0005886">
    <property type="term" value="C:plasma membrane"/>
    <property type="evidence" value="ECO:0007669"/>
    <property type="project" value="UniProtKB-SubCell"/>
</dbReference>
<dbReference type="GO" id="GO:0003774">
    <property type="term" value="F:cytoskeletal motor activity"/>
    <property type="evidence" value="ECO:0007669"/>
    <property type="project" value="InterPro"/>
</dbReference>
<dbReference type="GO" id="GO:0071978">
    <property type="term" value="P:bacterial-type flagellum-dependent swarming motility"/>
    <property type="evidence" value="ECO:0007669"/>
    <property type="project" value="TreeGrafter"/>
</dbReference>
<dbReference type="GO" id="GO:0050918">
    <property type="term" value="P:positive chemotaxis"/>
    <property type="evidence" value="ECO:0007669"/>
    <property type="project" value="TreeGrafter"/>
</dbReference>
<dbReference type="CDD" id="cd17908">
    <property type="entry name" value="FliM"/>
    <property type="match status" value="1"/>
</dbReference>
<dbReference type="Gene3D" id="3.40.1550.10">
    <property type="entry name" value="CheC-like"/>
    <property type="match status" value="1"/>
</dbReference>
<dbReference type="Gene3D" id="2.30.330.10">
    <property type="entry name" value="SpoA-like"/>
    <property type="match status" value="1"/>
</dbReference>
<dbReference type="InterPro" id="IPR028976">
    <property type="entry name" value="CheC-like_sf"/>
</dbReference>
<dbReference type="InterPro" id="IPR001689">
    <property type="entry name" value="Flag_FliM"/>
</dbReference>
<dbReference type="InterPro" id="IPR001543">
    <property type="entry name" value="FliN-like_C"/>
</dbReference>
<dbReference type="InterPro" id="IPR036429">
    <property type="entry name" value="SpoA-like_sf"/>
</dbReference>
<dbReference type="NCBIfam" id="TIGR01397">
    <property type="entry name" value="fliM_switch"/>
    <property type="match status" value="1"/>
</dbReference>
<dbReference type="PANTHER" id="PTHR30034">
    <property type="entry name" value="FLAGELLAR MOTOR SWITCH PROTEIN FLIM"/>
    <property type="match status" value="1"/>
</dbReference>
<dbReference type="PANTHER" id="PTHR30034:SF3">
    <property type="entry name" value="FLAGELLAR MOTOR SWITCH PROTEIN FLIM"/>
    <property type="match status" value="1"/>
</dbReference>
<dbReference type="Pfam" id="PF02154">
    <property type="entry name" value="FliM"/>
    <property type="match status" value="1"/>
</dbReference>
<dbReference type="Pfam" id="PF01052">
    <property type="entry name" value="FliMN_C"/>
    <property type="match status" value="1"/>
</dbReference>
<dbReference type="PIRSF" id="PIRSF002888">
    <property type="entry name" value="FliM"/>
    <property type="match status" value="1"/>
</dbReference>
<dbReference type="PRINTS" id="PR00955">
    <property type="entry name" value="FLGMOTORFLIM"/>
</dbReference>
<dbReference type="SUPFAM" id="SSF103039">
    <property type="entry name" value="CheC-like"/>
    <property type="match status" value="1"/>
</dbReference>
<dbReference type="SUPFAM" id="SSF101801">
    <property type="entry name" value="Surface presentation of antigens (SPOA)"/>
    <property type="match status" value="1"/>
</dbReference>
<sequence length="374" mass="41261">MADELDDQAAMAQWASENPPGGGEGVNEFGDFSGGMGGWDDGGGDGASERILNQDEIDSLLGFDLSGDGSDDRTGIRAIINSALVSYERLPMLEIVFDRLVRLMTTSLRNFTSDNVEVSLDNISSIRFGDYLNSIPLPAILAVFRAEELDNYGLLTVDSNLIYSIVDVLLGGRRGTAAMRIEGRPYTTIERVLVQRMIEVVLHDLKSAFEPLHPVSFSLDRLETNPRFAAIARPANAAILVKLRIDMEDRGGRIELLLPYATLEPIRKMLLQQFMGEKFGRDNIWEGHLATELWTTQMEVRAVLDEQQVPLSRVLNMQVGDTLMLNATPDSLVELRAGAIPLTRGRMGRRNHSIAVRAEAPLTPAAKKAVQKLK</sequence>
<reference key="1">
    <citation type="journal article" date="1992" name="J. Bacteriol.">
        <title>Early Caulobacter crescentus genes fliL and fliM are required for flagellar gene expression and normal cell division.</title>
        <authorList>
            <person name="Yu J."/>
            <person name="Shapiro L."/>
        </authorList>
    </citation>
    <scope>NUCLEOTIDE SEQUENCE [GENOMIC DNA]</scope>
</reference>
<reference key="2">
    <citation type="journal article" date="2010" name="J. Bacteriol.">
        <title>The genetic basis of laboratory adaptation in Caulobacter crescentus.</title>
        <authorList>
            <person name="Marks M.E."/>
            <person name="Castro-Rojas C.M."/>
            <person name="Teiling C."/>
            <person name="Du L."/>
            <person name="Kapatral V."/>
            <person name="Walunas T.L."/>
            <person name="Crosson S."/>
        </authorList>
    </citation>
    <scope>NUCLEOTIDE SEQUENCE [LARGE SCALE GENOMIC DNA]</scope>
    <source>
        <strain>NA1000 / CB15N</strain>
    </source>
</reference>
<comment type="function">
    <text evidence="1">FliM is one of three proteins (FliG, FliN, FliM) that forms the rotor-mounted switch complex (C ring), located at the base of the basal body. This complex interacts with the CheY and CheZ chemotaxis proteins, in addition to contacting components of the motor that determine the direction of flagellar rotation (By similarity).</text>
</comment>
<comment type="subcellular location">
    <subcellularLocation>
        <location>Cell inner membrane</location>
        <topology>Peripheral membrane protein</topology>
    </subcellularLocation>
    <subcellularLocation>
        <location evidence="1">Bacterial flagellum basal body</location>
    </subcellularLocation>
</comment>
<comment type="similarity">
    <text evidence="3">Belongs to the FliM family.</text>
</comment>
<comment type="caution">
    <text evidence="3">It is uncertain whether Met-1, Met-11, Val-26 or Met-36 is the initiator.</text>
</comment>
<feature type="chain" id="PRO_0000395337" description="Flagellar motor switch protein FliM">
    <location>
        <begin position="1"/>
        <end position="374"/>
    </location>
</feature>
<feature type="region of interest" description="Disordered" evidence="2">
    <location>
        <begin position="1"/>
        <end position="48"/>
    </location>
</feature>
<feature type="compositionally biased region" description="Gly residues" evidence="2">
    <location>
        <begin position="32"/>
        <end position="46"/>
    </location>
</feature>
<feature type="sequence conflict" description="In Ref. 1; AAA62449." evidence="3" ref="1">
    <original>A</original>
    <variation>G</variation>
    <location>
        <position position="139"/>
    </location>
</feature>
<feature type="sequence conflict" description="In Ref. 1; AAA62449." evidence="3" ref="1">
    <original>E</original>
    <variation>D</variation>
    <location>
        <position position="199"/>
    </location>
</feature>
<feature type="sequence conflict" description="In Ref. 1; AAA62449." evidence="3" ref="1">
    <original>R</original>
    <variation>P</variation>
    <location>
        <position position="227"/>
    </location>
</feature>
<feature type="sequence conflict" description="In Ref. 1; AAA62449." evidence="3" ref="1">
    <original>PDSLVELRAGA</original>
    <variation>SRQPGGAARRR</variation>
    <location>
        <begin position="329"/>
        <end position="339"/>
    </location>
</feature>
<feature type="sequence conflict" description="In Ref. 1; AAA62449." evidence="3" ref="1">
    <original>LTPAA</original>
    <variation>VDRR</variation>
    <location>
        <begin position="362"/>
        <end position="366"/>
    </location>
</feature>